<evidence type="ECO:0000255" key="1">
    <source>
        <dbReference type="HAMAP-Rule" id="MF_01300"/>
    </source>
</evidence>
<protein>
    <recommendedName>
        <fullName evidence="1">C4-dicarboxylate transport protein</fullName>
    </recommendedName>
</protein>
<feature type="chain" id="PRO_1000067449" description="C4-dicarboxylate transport protein">
    <location>
        <begin position="1"/>
        <end position="428"/>
    </location>
</feature>
<feature type="transmembrane region" description="Helical" evidence="1">
    <location>
        <begin position="8"/>
        <end position="28"/>
    </location>
</feature>
<feature type="transmembrane region" description="Helical" evidence="1">
    <location>
        <begin position="44"/>
        <end position="64"/>
    </location>
</feature>
<feature type="transmembrane region" description="Helical" evidence="1">
    <location>
        <begin position="76"/>
        <end position="96"/>
    </location>
</feature>
<feature type="transmembrane region" description="Helical" evidence="1">
    <location>
        <begin position="142"/>
        <end position="162"/>
    </location>
</feature>
<feature type="transmembrane region" description="Helical" evidence="1">
    <location>
        <begin position="184"/>
        <end position="204"/>
    </location>
</feature>
<feature type="transmembrane region" description="Helical" evidence="1">
    <location>
        <begin position="222"/>
        <end position="242"/>
    </location>
</feature>
<feature type="transmembrane region" description="Helical" evidence="1">
    <location>
        <begin position="326"/>
        <end position="346"/>
    </location>
</feature>
<feature type="transmembrane region" description="Helical" evidence="1">
    <location>
        <begin position="352"/>
        <end position="372"/>
    </location>
</feature>
<keyword id="KW-0997">Cell inner membrane</keyword>
<keyword id="KW-1003">Cell membrane</keyword>
<keyword id="KW-0472">Membrane</keyword>
<keyword id="KW-0769">Symport</keyword>
<keyword id="KW-0812">Transmembrane</keyword>
<keyword id="KW-1133">Transmembrane helix</keyword>
<keyword id="KW-0813">Transport</keyword>
<comment type="function">
    <text evidence="1">Responsible for the transport of dicarboxylates such as succinate, fumarate, and malate from the periplasm across the membrane.</text>
</comment>
<comment type="subcellular location">
    <subcellularLocation>
        <location evidence="1">Cell inner membrane</location>
        <topology evidence="1">Multi-pass membrane protein</topology>
    </subcellularLocation>
</comment>
<comment type="similarity">
    <text evidence="1">Belongs to the dicarboxylate/amino acid:cation symporter (DAACS) (TC 2.A.23) family.</text>
</comment>
<sequence>MKTSLFKSLYFQVLTAIAIGILLGHFYPELGAQMKPLGDAFVKLIKMIIAPVIFCTVVTGIAGMESMKAVGRTGAVALLYFEVVSTIALIIGLIIVNVMQPGAGMNVDPSTLDAKAVAIYAEQAKDQGIVAFLLDVIPGSVIGAFASGNILQVLLFAVLFGFALHRLGSKGQLIFNVIESFSQVIFGIINMIMRLAPIGAFGAMAFTIGKYGVGTLIQLGQLIICFYITCILFVVVVLGSIARATGFNIFKFIRYIREELLIVLGTSSSESALPRMLDKMEKLGCRKSVVGLVIPTGYSFNLDGTSIYLTMAAVFIAQATNTHMDIFHQITLLVVLLLSSKGAAGVTGSGFIVLAATISAVGHLPIAGLALILGIDRFMSEARALTNLIGNGVATVVVAKWVKELDHKKLDDTLNNRVPDSKTQGLSS</sequence>
<name>DCTA_ENT38</name>
<dbReference type="EMBL" id="CP000653">
    <property type="protein sequence ID" value="ABP62580.1"/>
    <property type="molecule type" value="Genomic_DNA"/>
</dbReference>
<dbReference type="RefSeq" id="WP_015960885.1">
    <property type="nucleotide sequence ID" value="NC_009436.1"/>
</dbReference>
<dbReference type="SMR" id="A4WFV0"/>
<dbReference type="STRING" id="399742.Ent638_3925"/>
<dbReference type="KEGG" id="ent:Ent638_3925"/>
<dbReference type="eggNOG" id="COG1301">
    <property type="taxonomic scope" value="Bacteria"/>
</dbReference>
<dbReference type="HOGENOM" id="CLU_019375_7_0_6"/>
<dbReference type="OrthoDB" id="9766690at2"/>
<dbReference type="Proteomes" id="UP000000230">
    <property type="component" value="Chromosome"/>
</dbReference>
<dbReference type="GO" id="GO:0005886">
    <property type="term" value="C:plasma membrane"/>
    <property type="evidence" value="ECO:0007669"/>
    <property type="project" value="UniProtKB-SubCell"/>
</dbReference>
<dbReference type="GO" id="GO:0015138">
    <property type="term" value="F:fumarate transmembrane transporter activity"/>
    <property type="evidence" value="ECO:0007669"/>
    <property type="project" value="TreeGrafter"/>
</dbReference>
<dbReference type="GO" id="GO:0015366">
    <property type="term" value="F:malate:proton symporter activity"/>
    <property type="evidence" value="ECO:0007669"/>
    <property type="project" value="TreeGrafter"/>
</dbReference>
<dbReference type="GO" id="GO:0015141">
    <property type="term" value="F:succinate transmembrane transporter activity"/>
    <property type="evidence" value="ECO:0007669"/>
    <property type="project" value="TreeGrafter"/>
</dbReference>
<dbReference type="GO" id="GO:0070778">
    <property type="term" value="P:L-aspartate transmembrane transport"/>
    <property type="evidence" value="ECO:0007669"/>
    <property type="project" value="TreeGrafter"/>
</dbReference>
<dbReference type="FunFam" id="1.10.3860.10:FF:000001">
    <property type="entry name" value="C4-dicarboxylate transport protein"/>
    <property type="match status" value="1"/>
</dbReference>
<dbReference type="Gene3D" id="1.10.3860.10">
    <property type="entry name" value="Sodium:dicarboxylate symporter"/>
    <property type="match status" value="1"/>
</dbReference>
<dbReference type="HAMAP" id="MF_01300">
    <property type="entry name" value="C4_dicarb_transport"/>
    <property type="match status" value="1"/>
</dbReference>
<dbReference type="InterPro" id="IPR023954">
    <property type="entry name" value="C4_dicarb_transport"/>
</dbReference>
<dbReference type="InterPro" id="IPR001991">
    <property type="entry name" value="Na-dicarboxylate_symporter"/>
</dbReference>
<dbReference type="InterPro" id="IPR018107">
    <property type="entry name" value="Na-dicarboxylate_symporter_CS"/>
</dbReference>
<dbReference type="InterPro" id="IPR036458">
    <property type="entry name" value="Na:dicarbo_symporter_sf"/>
</dbReference>
<dbReference type="NCBIfam" id="NF002461">
    <property type="entry name" value="PRK01663.1"/>
    <property type="match status" value="1"/>
</dbReference>
<dbReference type="NCBIfam" id="NF009587">
    <property type="entry name" value="PRK13027.1"/>
    <property type="match status" value="1"/>
</dbReference>
<dbReference type="PANTHER" id="PTHR42865:SF1">
    <property type="entry name" value="AEROBIC C4-DICARBOXYLATE TRANSPORT PROTEIN"/>
    <property type="match status" value="1"/>
</dbReference>
<dbReference type="PANTHER" id="PTHR42865">
    <property type="entry name" value="PROTON/GLUTAMATE-ASPARTATE SYMPORTER"/>
    <property type="match status" value="1"/>
</dbReference>
<dbReference type="Pfam" id="PF00375">
    <property type="entry name" value="SDF"/>
    <property type="match status" value="1"/>
</dbReference>
<dbReference type="PRINTS" id="PR00173">
    <property type="entry name" value="EDTRNSPORT"/>
</dbReference>
<dbReference type="SUPFAM" id="SSF118215">
    <property type="entry name" value="Proton glutamate symport protein"/>
    <property type="match status" value="1"/>
</dbReference>
<dbReference type="PROSITE" id="PS00713">
    <property type="entry name" value="NA_DICARBOXYL_SYMP_1"/>
    <property type="match status" value="1"/>
</dbReference>
<dbReference type="PROSITE" id="PS00714">
    <property type="entry name" value="NA_DICARBOXYL_SYMP_2"/>
    <property type="match status" value="1"/>
</dbReference>
<gene>
    <name evidence="1" type="primary">dctA</name>
    <name type="ordered locus">Ent638_3925</name>
</gene>
<reference key="1">
    <citation type="journal article" date="2010" name="PLoS Genet.">
        <title>Genome sequence of the plant growth promoting endophytic bacterium Enterobacter sp. 638.</title>
        <authorList>
            <person name="Taghavi S."/>
            <person name="van der Lelie D."/>
            <person name="Hoffman A."/>
            <person name="Zhang Y.B."/>
            <person name="Walla M.D."/>
            <person name="Vangronsveld J."/>
            <person name="Newman L."/>
            <person name="Monchy S."/>
        </authorList>
    </citation>
    <scope>NUCLEOTIDE SEQUENCE [LARGE SCALE GENOMIC DNA]</scope>
    <source>
        <strain>638</strain>
    </source>
</reference>
<organism>
    <name type="scientific">Enterobacter sp. (strain 638)</name>
    <dbReference type="NCBI Taxonomy" id="399742"/>
    <lineage>
        <taxon>Bacteria</taxon>
        <taxon>Pseudomonadati</taxon>
        <taxon>Pseudomonadota</taxon>
        <taxon>Gammaproteobacteria</taxon>
        <taxon>Enterobacterales</taxon>
        <taxon>Enterobacteriaceae</taxon>
        <taxon>Enterobacter</taxon>
    </lineage>
</organism>
<proteinExistence type="inferred from homology"/>
<accession>A4WFV0</accession>